<protein>
    <recommendedName>
        <fullName evidence="1">Large ribosomal subunit protein bL19</fullName>
    </recommendedName>
    <alternativeName>
        <fullName evidence="2">50S ribosomal protein L19</fullName>
    </alternativeName>
</protein>
<gene>
    <name evidence="1" type="primary">rplS</name>
    <name type="ordered locus">RPB_0349</name>
</gene>
<reference key="1">
    <citation type="submission" date="2006-01" db="EMBL/GenBank/DDBJ databases">
        <title>Complete sequence of Rhodopseudomonas palustris HaA2.</title>
        <authorList>
            <consortium name="US DOE Joint Genome Institute"/>
            <person name="Copeland A."/>
            <person name="Lucas S."/>
            <person name="Lapidus A."/>
            <person name="Barry K."/>
            <person name="Detter J.C."/>
            <person name="Glavina T."/>
            <person name="Hammon N."/>
            <person name="Israni S."/>
            <person name="Pitluck S."/>
            <person name="Chain P."/>
            <person name="Malfatti S."/>
            <person name="Shin M."/>
            <person name="Vergez L."/>
            <person name="Schmutz J."/>
            <person name="Larimer F."/>
            <person name="Land M."/>
            <person name="Hauser L."/>
            <person name="Pelletier D.A."/>
            <person name="Kyrpides N."/>
            <person name="Anderson I."/>
            <person name="Oda Y."/>
            <person name="Harwood C.S."/>
            <person name="Richardson P."/>
        </authorList>
    </citation>
    <scope>NUCLEOTIDE SEQUENCE [LARGE SCALE GENOMIC DNA]</scope>
    <source>
        <strain>HaA2</strain>
    </source>
</reference>
<comment type="function">
    <text evidence="1">This protein is located at the 30S-50S ribosomal subunit interface and may play a role in the structure and function of the aminoacyl-tRNA binding site.</text>
</comment>
<comment type="similarity">
    <text evidence="1">Belongs to the bacterial ribosomal protein bL19 family.</text>
</comment>
<proteinExistence type="inferred from homology"/>
<evidence type="ECO:0000255" key="1">
    <source>
        <dbReference type="HAMAP-Rule" id="MF_00402"/>
    </source>
</evidence>
<evidence type="ECO:0000305" key="2"/>
<accession>Q2J3A0</accession>
<keyword id="KW-1185">Reference proteome</keyword>
<keyword id="KW-0687">Ribonucleoprotein</keyword>
<keyword id="KW-0689">Ribosomal protein</keyword>
<organism>
    <name type="scientific">Rhodopseudomonas palustris (strain HaA2)</name>
    <dbReference type="NCBI Taxonomy" id="316058"/>
    <lineage>
        <taxon>Bacteria</taxon>
        <taxon>Pseudomonadati</taxon>
        <taxon>Pseudomonadota</taxon>
        <taxon>Alphaproteobacteria</taxon>
        <taxon>Hyphomicrobiales</taxon>
        <taxon>Nitrobacteraceae</taxon>
        <taxon>Rhodopseudomonas</taxon>
    </lineage>
</organism>
<name>RL19_RHOP2</name>
<dbReference type="EMBL" id="CP000250">
    <property type="protein sequence ID" value="ABD05060.1"/>
    <property type="molecule type" value="Genomic_DNA"/>
</dbReference>
<dbReference type="RefSeq" id="WP_011439250.1">
    <property type="nucleotide sequence ID" value="NC_007778.1"/>
</dbReference>
<dbReference type="SMR" id="Q2J3A0"/>
<dbReference type="STRING" id="316058.RPB_0349"/>
<dbReference type="KEGG" id="rpb:RPB_0349"/>
<dbReference type="eggNOG" id="COG0335">
    <property type="taxonomic scope" value="Bacteria"/>
</dbReference>
<dbReference type="HOGENOM" id="CLU_103507_2_1_5"/>
<dbReference type="OrthoDB" id="9803541at2"/>
<dbReference type="Proteomes" id="UP000008809">
    <property type="component" value="Chromosome"/>
</dbReference>
<dbReference type="GO" id="GO:0022625">
    <property type="term" value="C:cytosolic large ribosomal subunit"/>
    <property type="evidence" value="ECO:0007669"/>
    <property type="project" value="TreeGrafter"/>
</dbReference>
<dbReference type="GO" id="GO:0003735">
    <property type="term" value="F:structural constituent of ribosome"/>
    <property type="evidence" value="ECO:0007669"/>
    <property type="project" value="InterPro"/>
</dbReference>
<dbReference type="GO" id="GO:0006412">
    <property type="term" value="P:translation"/>
    <property type="evidence" value="ECO:0007669"/>
    <property type="project" value="UniProtKB-UniRule"/>
</dbReference>
<dbReference type="FunFam" id="2.30.30.790:FF:000001">
    <property type="entry name" value="50S ribosomal protein L19"/>
    <property type="match status" value="1"/>
</dbReference>
<dbReference type="Gene3D" id="2.30.30.790">
    <property type="match status" value="1"/>
</dbReference>
<dbReference type="HAMAP" id="MF_00402">
    <property type="entry name" value="Ribosomal_bL19"/>
    <property type="match status" value="1"/>
</dbReference>
<dbReference type="InterPro" id="IPR001857">
    <property type="entry name" value="Ribosomal_bL19"/>
</dbReference>
<dbReference type="InterPro" id="IPR018257">
    <property type="entry name" value="Ribosomal_bL19_CS"/>
</dbReference>
<dbReference type="InterPro" id="IPR038657">
    <property type="entry name" value="Ribosomal_bL19_sf"/>
</dbReference>
<dbReference type="InterPro" id="IPR008991">
    <property type="entry name" value="Translation_prot_SH3-like_sf"/>
</dbReference>
<dbReference type="NCBIfam" id="TIGR01024">
    <property type="entry name" value="rplS_bact"/>
    <property type="match status" value="1"/>
</dbReference>
<dbReference type="PANTHER" id="PTHR15680:SF9">
    <property type="entry name" value="LARGE RIBOSOMAL SUBUNIT PROTEIN BL19M"/>
    <property type="match status" value="1"/>
</dbReference>
<dbReference type="PANTHER" id="PTHR15680">
    <property type="entry name" value="RIBOSOMAL PROTEIN L19"/>
    <property type="match status" value="1"/>
</dbReference>
<dbReference type="Pfam" id="PF01245">
    <property type="entry name" value="Ribosomal_L19"/>
    <property type="match status" value="1"/>
</dbReference>
<dbReference type="PIRSF" id="PIRSF002191">
    <property type="entry name" value="Ribosomal_L19"/>
    <property type="match status" value="1"/>
</dbReference>
<dbReference type="PRINTS" id="PR00061">
    <property type="entry name" value="RIBOSOMALL19"/>
</dbReference>
<dbReference type="SUPFAM" id="SSF50104">
    <property type="entry name" value="Translation proteins SH3-like domain"/>
    <property type="match status" value="1"/>
</dbReference>
<dbReference type="PROSITE" id="PS01015">
    <property type="entry name" value="RIBOSOMAL_L19"/>
    <property type="match status" value="1"/>
</dbReference>
<feature type="chain" id="PRO_0000252536" description="Large ribosomal subunit protein bL19">
    <location>
        <begin position="1"/>
        <end position="131"/>
    </location>
</feature>
<sequence>MNLIQTLEKEQFDKLSAGKTIPEFGPGDTVIVNVKVVEGERSRVQAYEGVCIGRSGGGINESFTVRKISYGEGVERVFPLLSPMIDSIKVVRRGKVRRAKLYYLRNLRGKSARIVEKKQDRPAKVAAGAAE</sequence>